<organism>
    <name type="scientific">Neisseria meningitidis serogroup C (strain 053442)</name>
    <dbReference type="NCBI Taxonomy" id="374833"/>
    <lineage>
        <taxon>Bacteria</taxon>
        <taxon>Pseudomonadati</taxon>
        <taxon>Pseudomonadota</taxon>
        <taxon>Betaproteobacteria</taxon>
        <taxon>Neisseriales</taxon>
        <taxon>Neisseriaceae</taxon>
        <taxon>Neisseria</taxon>
    </lineage>
</organism>
<reference key="1">
    <citation type="journal article" date="2008" name="Genomics">
        <title>Characterization of ST-4821 complex, a unique Neisseria meningitidis clone.</title>
        <authorList>
            <person name="Peng J."/>
            <person name="Yang L."/>
            <person name="Yang F."/>
            <person name="Yang J."/>
            <person name="Yan Y."/>
            <person name="Nie H."/>
            <person name="Zhang X."/>
            <person name="Xiong Z."/>
            <person name="Jiang Y."/>
            <person name="Cheng F."/>
            <person name="Xu X."/>
            <person name="Chen S."/>
            <person name="Sun L."/>
            <person name="Li W."/>
            <person name="Shen Y."/>
            <person name="Shao Z."/>
            <person name="Liang X."/>
            <person name="Xu J."/>
            <person name="Jin Q."/>
        </authorList>
    </citation>
    <scope>NUCLEOTIDE SEQUENCE [LARGE SCALE GENOMIC DNA]</scope>
    <source>
        <strain>053442</strain>
    </source>
</reference>
<keyword id="KW-0131">Cell cycle</keyword>
<keyword id="KW-0132">Cell division</keyword>
<keyword id="KW-0997">Cell inner membrane</keyword>
<keyword id="KW-1003">Cell membrane</keyword>
<keyword id="KW-0133">Cell shape</keyword>
<keyword id="KW-0961">Cell wall biogenesis/degradation</keyword>
<keyword id="KW-0328">Glycosyltransferase</keyword>
<keyword id="KW-0472">Membrane</keyword>
<keyword id="KW-0573">Peptidoglycan synthesis</keyword>
<keyword id="KW-0808">Transferase</keyword>
<protein>
    <recommendedName>
        <fullName evidence="1">UDP-N-acetylglucosamine--N-acetylmuramyl-(pentapeptide) pyrophosphoryl-undecaprenol N-acetylglucosamine transferase</fullName>
        <ecNumber evidence="1">2.4.1.227</ecNumber>
    </recommendedName>
    <alternativeName>
        <fullName evidence="1">Undecaprenyl-PP-MurNAc-pentapeptide-UDPGlcNAc GlcNAc transferase</fullName>
    </alternativeName>
</protein>
<accession>A9M2H3</accession>
<gene>
    <name evidence="1" type="primary">murG</name>
    <name type="ordered locus">NMCC_1722</name>
</gene>
<dbReference type="EC" id="2.4.1.227" evidence="1"/>
<dbReference type="EMBL" id="CP000381">
    <property type="protein sequence ID" value="ABX73865.1"/>
    <property type="molecule type" value="Genomic_DNA"/>
</dbReference>
<dbReference type="RefSeq" id="WP_002220375.1">
    <property type="nucleotide sequence ID" value="NC_010120.1"/>
</dbReference>
<dbReference type="SMR" id="A9M2H3"/>
<dbReference type="CAZy" id="GT28">
    <property type="family name" value="Glycosyltransferase Family 28"/>
</dbReference>
<dbReference type="KEGG" id="nmn:NMCC_1722"/>
<dbReference type="HOGENOM" id="CLU_037404_2_0_4"/>
<dbReference type="UniPathway" id="UPA00219"/>
<dbReference type="Proteomes" id="UP000001177">
    <property type="component" value="Chromosome"/>
</dbReference>
<dbReference type="GO" id="GO:0005886">
    <property type="term" value="C:plasma membrane"/>
    <property type="evidence" value="ECO:0007669"/>
    <property type="project" value="UniProtKB-SubCell"/>
</dbReference>
<dbReference type="GO" id="GO:0051991">
    <property type="term" value="F:UDP-N-acetyl-D-glucosamine:N-acetylmuramoyl-L-alanyl-D-glutamyl-meso-2,6-diaminopimelyl-D-alanyl-D-alanine-diphosphoundecaprenol 4-beta-N-acetylglucosaminlytransferase activity"/>
    <property type="evidence" value="ECO:0007669"/>
    <property type="project" value="RHEA"/>
</dbReference>
<dbReference type="GO" id="GO:0050511">
    <property type="term" value="F:undecaprenyldiphospho-muramoylpentapeptide beta-N-acetylglucosaminyltransferase activity"/>
    <property type="evidence" value="ECO:0007669"/>
    <property type="project" value="UniProtKB-UniRule"/>
</dbReference>
<dbReference type="GO" id="GO:0005975">
    <property type="term" value="P:carbohydrate metabolic process"/>
    <property type="evidence" value="ECO:0007669"/>
    <property type="project" value="InterPro"/>
</dbReference>
<dbReference type="GO" id="GO:0051301">
    <property type="term" value="P:cell division"/>
    <property type="evidence" value="ECO:0007669"/>
    <property type="project" value="UniProtKB-KW"/>
</dbReference>
<dbReference type="GO" id="GO:0071555">
    <property type="term" value="P:cell wall organization"/>
    <property type="evidence" value="ECO:0007669"/>
    <property type="project" value="UniProtKB-KW"/>
</dbReference>
<dbReference type="GO" id="GO:0030259">
    <property type="term" value="P:lipid glycosylation"/>
    <property type="evidence" value="ECO:0007669"/>
    <property type="project" value="UniProtKB-UniRule"/>
</dbReference>
<dbReference type="GO" id="GO:0009252">
    <property type="term" value="P:peptidoglycan biosynthetic process"/>
    <property type="evidence" value="ECO:0007669"/>
    <property type="project" value="UniProtKB-UniRule"/>
</dbReference>
<dbReference type="GO" id="GO:0008360">
    <property type="term" value="P:regulation of cell shape"/>
    <property type="evidence" value="ECO:0007669"/>
    <property type="project" value="UniProtKB-KW"/>
</dbReference>
<dbReference type="CDD" id="cd03785">
    <property type="entry name" value="GT28_MurG"/>
    <property type="match status" value="1"/>
</dbReference>
<dbReference type="Gene3D" id="3.40.50.2000">
    <property type="entry name" value="Glycogen Phosphorylase B"/>
    <property type="match status" value="2"/>
</dbReference>
<dbReference type="HAMAP" id="MF_00033">
    <property type="entry name" value="MurG"/>
    <property type="match status" value="1"/>
</dbReference>
<dbReference type="InterPro" id="IPR006009">
    <property type="entry name" value="GlcNAc_MurG"/>
</dbReference>
<dbReference type="InterPro" id="IPR007235">
    <property type="entry name" value="Glyco_trans_28_C"/>
</dbReference>
<dbReference type="InterPro" id="IPR004276">
    <property type="entry name" value="GlycoTrans_28_N"/>
</dbReference>
<dbReference type="NCBIfam" id="TIGR01133">
    <property type="entry name" value="murG"/>
    <property type="match status" value="1"/>
</dbReference>
<dbReference type="PANTHER" id="PTHR21015:SF22">
    <property type="entry name" value="GLYCOSYLTRANSFERASE"/>
    <property type="match status" value="1"/>
</dbReference>
<dbReference type="PANTHER" id="PTHR21015">
    <property type="entry name" value="UDP-N-ACETYLGLUCOSAMINE--N-ACETYLMURAMYL-(PENTAPEPTIDE) PYROPHOSPHORYL-UNDECAPRENOL N-ACETYLGLUCOSAMINE TRANSFERASE 1"/>
    <property type="match status" value="1"/>
</dbReference>
<dbReference type="Pfam" id="PF04101">
    <property type="entry name" value="Glyco_tran_28_C"/>
    <property type="match status" value="1"/>
</dbReference>
<dbReference type="Pfam" id="PF03033">
    <property type="entry name" value="Glyco_transf_28"/>
    <property type="match status" value="1"/>
</dbReference>
<dbReference type="SUPFAM" id="SSF53756">
    <property type="entry name" value="UDP-Glycosyltransferase/glycogen phosphorylase"/>
    <property type="match status" value="1"/>
</dbReference>
<evidence type="ECO:0000255" key="1">
    <source>
        <dbReference type="HAMAP-Rule" id="MF_00033"/>
    </source>
</evidence>
<feature type="chain" id="PRO_1000074461" description="UDP-N-acetylglucosamine--N-acetylmuramyl-(pentapeptide) pyrophosphoryl-undecaprenol N-acetylglucosamine transferase">
    <location>
        <begin position="1"/>
        <end position="355"/>
    </location>
</feature>
<feature type="binding site" evidence="1">
    <location>
        <begin position="13"/>
        <end position="15"/>
    </location>
    <ligand>
        <name>UDP-N-acetyl-alpha-D-glucosamine</name>
        <dbReference type="ChEBI" id="CHEBI:57705"/>
    </ligand>
</feature>
<feature type="binding site" evidence="1">
    <location>
        <position position="125"/>
    </location>
    <ligand>
        <name>UDP-N-acetyl-alpha-D-glucosamine</name>
        <dbReference type="ChEBI" id="CHEBI:57705"/>
    </ligand>
</feature>
<feature type="binding site" evidence="1">
    <location>
        <position position="162"/>
    </location>
    <ligand>
        <name>UDP-N-acetyl-alpha-D-glucosamine</name>
        <dbReference type="ChEBI" id="CHEBI:57705"/>
    </ligand>
</feature>
<feature type="binding site" evidence="1">
    <location>
        <position position="190"/>
    </location>
    <ligand>
        <name>UDP-N-acetyl-alpha-D-glucosamine</name>
        <dbReference type="ChEBI" id="CHEBI:57705"/>
    </ligand>
</feature>
<feature type="binding site" evidence="1">
    <location>
        <position position="244"/>
    </location>
    <ligand>
        <name>UDP-N-acetyl-alpha-D-glucosamine</name>
        <dbReference type="ChEBI" id="CHEBI:57705"/>
    </ligand>
</feature>
<feature type="binding site" evidence="1">
    <location>
        <position position="289"/>
    </location>
    <ligand>
        <name>UDP-N-acetyl-alpha-D-glucosamine</name>
        <dbReference type="ChEBI" id="CHEBI:57705"/>
    </ligand>
</feature>
<comment type="function">
    <text evidence="1">Cell wall formation. Catalyzes the transfer of a GlcNAc subunit on undecaprenyl-pyrophosphoryl-MurNAc-pentapeptide (lipid intermediate I) to form undecaprenyl-pyrophosphoryl-MurNAc-(pentapeptide)GlcNAc (lipid intermediate II).</text>
</comment>
<comment type="catalytic activity">
    <reaction evidence="1">
        <text>di-trans,octa-cis-undecaprenyl diphospho-N-acetyl-alpha-D-muramoyl-L-alanyl-D-glutamyl-meso-2,6-diaminopimeloyl-D-alanyl-D-alanine + UDP-N-acetyl-alpha-D-glucosamine = di-trans,octa-cis-undecaprenyl diphospho-[N-acetyl-alpha-D-glucosaminyl-(1-&gt;4)]-N-acetyl-alpha-D-muramoyl-L-alanyl-D-glutamyl-meso-2,6-diaminopimeloyl-D-alanyl-D-alanine + UDP + H(+)</text>
        <dbReference type="Rhea" id="RHEA:31227"/>
        <dbReference type="ChEBI" id="CHEBI:15378"/>
        <dbReference type="ChEBI" id="CHEBI:57705"/>
        <dbReference type="ChEBI" id="CHEBI:58223"/>
        <dbReference type="ChEBI" id="CHEBI:61387"/>
        <dbReference type="ChEBI" id="CHEBI:61388"/>
        <dbReference type="EC" id="2.4.1.227"/>
    </reaction>
</comment>
<comment type="pathway">
    <text evidence="1">Cell wall biogenesis; peptidoglycan biosynthesis.</text>
</comment>
<comment type="subcellular location">
    <subcellularLocation>
        <location evidence="1">Cell inner membrane</location>
        <topology evidence="1">Peripheral membrane protein</topology>
        <orientation evidence="1">Cytoplasmic side</orientation>
    </subcellularLocation>
</comment>
<comment type="similarity">
    <text evidence="1">Belongs to the glycosyltransferase 28 family. MurG subfamily.</text>
</comment>
<name>MURG_NEIM0</name>
<proteinExistence type="inferred from homology"/>
<sequence length="355" mass="38099">MGGKTFMLMAGGTGGHIFPALAVADSLRARGHHVIWLGSKDSMEERIVPQYGIRLETLAIKGVRGNGIKRKLMLPFTLYQTVREAQRIIRKHRVECVIGFGGFVTFPGGLAAKLLGVPIVIHEQNAVAGLSNRHLSRWAKRVLYAFPKAFSHEGGLVGNPVRADISNLPVPAERFQGREGRLKILVVGGSLGADVLNKTVPQALALLPDNARPQMYHQSGRGKLGSLQADYDALGVQAECVEFITDMVSAYRDADLVICRAGALTIAELTAAGLGALLVPYPHAVDDHQTANARFMVQAEAGLLLPQTQLTAEKLAEILGSLNREKCLKWAENARTLALPHSADDVAEAAIACAA</sequence>